<name>KDSB_PECAS</name>
<protein>
    <recommendedName>
        <fullName evidence="1">3-deoxy-manno-octulosonate cytidylyltransferase</fullName>
        <ecNumber evidence="1">2.7.7.38</ecNumber>
    </recommendedName>
    <alternativeName>
        <fullName evidence="1">CMP-2-keto-3-deoxyoctulosonic acid synthase</fullName>
        <shortName evidence="1">CKS</shortName>
        <shortName evidence="1">CMP-KDO synthase</shortName>
    </alternativeName>
</protein>
<organism>
    <name type="scientific">Pectobacterium atrosepticum (strain SCRI 1043 / ATCC BAA-672)</name>
    <name type="common">Erwinia carotovora subsp. atroseptica</name>
    <dbReference type="NCBI Taxonomy" id="218491"/>
    <lineage>
        <taxon>Bacteria</taxon>
        <taxon>Pseudomonadati</taxon>
        <taxon>Pseudomonadota</taxon>
        <taxon>Gammaproteobacteria</taxon>
        <taxon>Enterobacterales</taxon>
        <taxon>Pectobacteriaceae</taxon>
        <taxon>Pectobacterium</taxon>
    </lineage>
</organism>
<gene>
    <name evidence="1" type="primary">kdsB</name>
    <name type="ordered locus">ECA2554</name>
</gene>
<keyword id="KW-0963">Cytoplasm</keyword>
<keyword id="KW-0448">Lipopolysaccharide biosynthesis</keyword>
<keyword id="KW-0548">Nucleotidyltransferase</keyword>
<keyword id="KW-1185">Reference proteome</keyword>
<keyword id="KW-0808">Transferase</keyword>
<evidence type="ECO:0000255" key="1">
    <source>
        <dbReference type="HAMAP-Rule" id="MF_00057"/>
    </source>
</evidence>
<comment type="function">
    <text evidence="1">Activates KDO (a required 8-carbon sugar) for incorporation into bacterial lipopolysaccharide in Gram-negative bacteria.</text>
</comment>
<comment type="catalytic activity">
    <reaction evidence="1">
        <text>3-deoxy-alpha-D-manno-oct-2-ulosonate + CTP = CMP-3-deoxy-beta-D-manno-octulosonate + diphosphate</text>
        <dbReference type="Rhea" id="RHEA:23448"/>
        <dbReference type="ChEBI" id="CHEBI:33019"/>
        <dbReference type="ChEBI" id="CHEBI:37563"/>
        <dbReference type="ChEBI" id="CHEBI:85986"/>
        <dbReference type="ChEBI" id="CHEBI:85987"/>
        <dbReference type="EC" id="2.7.7.38"/>
    </reaction>
</comment>
<comment type="pathway">
    <text evidence="1">Nucleotide-sugar biosynthesis; CMP-3-deoxy-D-manno-octulosonate biosynthesis; CMP-3-deoxy-D-manno-octulosonate from 3-deoxy-D-manno-octulosonate and CTP: step 1/1.</text>
</comment>
<comment type="pathway">
    <text evidence="1">Bacterial outer membrane biogenesis; lipopolysaccharide biosynthesis.</text>
</comment>
<comment type="subcellular location">
    <subcellularLocation>
        <location evidence="1">Cytoplasm</location>
    </subcellularLocation>
</comment>
<comment type="similarity">
    <text evidence="1">Belongs to the KdsB family.</text>
</comment>
<reference key="1">
    <citation type="journal article" date="2004" name="Proc. Natl. Acad. Sci. U.S.A.">
        <title>Genome sequence of the enterobacterial phytopathogen Erwinia carotovora subsp. atroseptica and characterization of virulence factors.</title>
        <authorList>
            <person name="Bell K.S."/>
            <person name="Sebaihia M."/>
            <person name="Pritchard L."/>
            <person name="Holden M.T.G."/>
            <person name="Hyman L.J."/>
            <person name="Holeva M.C."/>
            <person name="Thomson N.R."/>
            <person name="Bentley S.D."/>
            <person name="Churcher L.J.C."/>
            <person name="Mungall K."/>
            <person name="Atkin R."/>
            <person name="Bason N."/>
            <person name="Brooks K."/>
            <person name="Chillingworth T."/>
            <person name="Clark K."/>
            <person name="Doggett J."/>
            <person name="Fraser A."/>
            <person name="Hance Z."/>
            <person name="Hauser H."/>
            <person name="Jagels K."/>
            <person name="Moule S."/>
            <person name="Norbertczak H."/>
            <person name="Ormond D."/>
            <person name="Price C."/>
            <person name="Quail M.A."/>
            <person name="Sanders M."/>
            <person name="Walker D."/>
            <person name="Whitehead S."/>
            <person name="Salmond G.P.C."/>
            <person name="Birch P.R.J."/>
            <person name="Parkhill J."/>
            <person name="Toth I.K."/>
        </authorList>
    </citation>
    <scope>NUCLEOTIDE SEQUENCE [LARGE SCALE GENOMIC DNA]</scope>
    <source>
        <strain>SCRI 1043 / ATCC BAA-672</strain>
    </source>
</reference>
<dbReference type="EC" id="2.7.7.38" evidence="1"/>
<dbReference type="EMBL" id="BX950851">
    <property type="protein sequence ID" value="CAG75453.1"/>
    <property type="molecule type" value="Genomic_DNA"/>
</dbReference>
<dbReference type="RefSeq" id="WP_011094099.1">
    <property type="nucleotide sequence ID" value="NC_004547.2"/>
</dbReference>
<dbReference type="SMR" id="Q6D440"/>
<dbReference type="STRING" id="218491.ECA2554"/>
<dbReference type="GeneID" id="57208749"/>
<dbReference type="KEGG" id="eca:ECA2554"/>
<dbReference type="PATRIC" id="fig|218491.5.peg.2589"/>
<dbReference type="eggNOG" id="COG1212">
    <property type="taxonomic scope" value="Bacteria"/>
</dbReference>
<dbReference type="HOGENOM" id="CLU_065038_1_0_6"/>
<dbReference type="OrthoDB" id="9815559at2"/>
<dbReference type="UniPathway" id="UPA00030"/>
<dbReference type="UniPathway" id="UPA00358">
    <property type="reaction ID" value="UER00476"/>
</dbReference>
<dbReference type="Proteomes" id="UP000007966">
    <property type="component" value="Chromosome"/>
</dbReference>
<dbReference type="GO" id="GO:0005829">
    <property type="term" value="C:cytosol"/>
    <property type="evidence" value="ECO:0007669"/>
    <property type="project" value="TreeGrafter"/>
</dbReference>
<dbReference type="GO" id="GO:0008690">
    <property type="term" value="F:3-deoxy-manno-octulosonate cytidylyltransferase activity"/>
    <property type="evidence" value="ECO:0007669"/>
    <property type="project" value="UniProtKB-UniRule"/>
</dbReference>
<dbReference type="GO" id="GO:0033468">
    <property type="term" value="P:CMP-keto-3-deoxy-D-manno-octulosonic acid biosynthetic process"/>
    <property type="evidence" value="ECO:0007669"/>
    <property type="project" value="UniProtKB-UniRule"/>
</dbReference>
<dbReference type="GO" id="GO:0009103">
    <property type="term" value="P:lipopolysaccharide biosynthetic process"/>
    <property type="evidence" value="ECO:0007669"/>
    <property type="project" value="UniProtKB-UniRule"/>
</dbReference>
<dbReference type="CDD" id="cd02517">
    <property type="entry name" value="CMP-KDO-Synthetase"/>
    <property type="match status" value="1"/>
</dbReference>
<dbReference type="FunFam" id="3.90.550.10:FF:000011">
    <property type="entry name" value="3-deoxy-manno-octulosonate cytidylyltransferase"/>
    <property type="match status" value="1"/>
</dbReference>
<dbReference type="Gene3D" id="3.90.550.10">
    <property type="entry name" value="Spore Coat Polysaccharide Biosynthesis Protein SpsA, Chain A"/>
    <property type="match status" value="1"/>
</dbReference>
<dbReference type="HAMAP" id="MF_00057">
    <property type="entry name" value="KdsB"/>
    <property type="match status" value="1"/>
</dbReference>
<dbReference type="InterPro" id="IPR003329">
    <property type="entry name" value="Cytidylyl_trans"/>
</dbReference>
<dbReference type="InterPro" id="IPR004528">
    <property type="entry name" value="KdsB"/>
</dbReference>
<dbReference type="InterPro" id="IPR029044">
    <property type="entry name" value="Nucleotide-diphossugar_trans"/>
</dbReference>
<dbReference type="NCBIfam" id="TIGR00466">
    <property type="entry name" value="kdsB"/>
    <property type="match status" value="1"/>
</dbReference>
<dbReference type="NCBIfam" id="NF003950">
    <property type="entry name" value="PRK05450.1-3"/>
    <property type="match status" value="1"/>
</dbReference>
<dbReference type="NCBIfam" id="NF003952">
    <property type="entry name" value="PRK05450.1-5"/>
    <property type="match status" value="1"/>
</dbReference>
<dbReference type="NCBIfam" id="NF009905">
    <property type="entry name" value="PRK13368.1"/>
    <property type="match status" value="1"/>
</dbReference>
<dbReference type="PANTHER" id="PTHR42866">
    <property type="entry name" value="3-DEOXY-MANNO-OCTULOSONATE CYTIDYLYLTRANSFERASE"/>
    <property type="match status" value="1"/>
</dbReference>
<dbReference type="PANTHER" id="PTHR42866:SF2">
    <property type="entry name" value="3-DEOXY-MANNO-OCTULOSONATE CYTIDYLYLTRANSFERASE, MITOCHONDRIAL"/>
    <property type="match status" value="1"/>
</dbReference>
<dbReference type="Pfam" id="PF02348">
    <property type="entry name" value="CTP_transf_3"/>
    <property type="match status" value="1"/>
</dbReference>
<dbReference type="SUPFAM" id="SSF53448">
    <property type="entry name" value="Nucleotide-diphospho-sugar transferases"/>
    <property type="match status" value="1"/>
</dbReference>
<accession>Q6D440</accession>
<feature type="chain" id="PRO_1000003358" description="3-deoxy-manno-octulosonate cytidylyltransferase">
    <location>
        <begin position="1"/>
        <end position="250"/>
    </location>
</feature>
<sequence length="250" mass="27591">MTFTVIIPARFASSRLPGKPLADINGKPMVVHVMERAQESGAQRVIVATDHPDVEVAVRQAGGEVCLTRADHNSGTERLAEVIERYGFTDDDIIVNVQGDEPLIPSVIIRQVAENLAASKAGMATLAVPIETSEEAFNPNAVKVVTDAEGYALYFSRATIPWDRERFAQSKETIGDHFLRHIGIYAYRAGFVRRYVTWAPSQLEQIELLEQLRVLWYGEKIHVAVAKAVPSVGVDTPEDLARVRQVMAGQ</sequence>
<proteinExistence type="inferred from homology"/>